<reference key="1">
    <citation type="journal article" date="2010" name="Genome Biol. Evol.">
        <title>Continuing evolution of Burkholderia mallei through genome reduction and large-scale rearrangements.</title>
        <authorList>
            <person name="Losada L."/>
            <person name="Ronning C.M."/>
            <person name="DeShazer D."/>
            <person name="Woods D."/>
            <person name="Fedorova N."/>
            <person name="Kim H.S."/>
            <person name="Shabalina S.A."/>
            <person name="Pearson T.R."/>
            <person name="Brinkac L."/>
            <person name="Tan P."/>
            <person name="Nandi T."/>
            <person name="Crabtree J."/>
            <person name="Badger J."/>
            <person name="Beckstrom-Sternberg S."/>
            <person name="Saqib M."/>
            <person name="Schutzer S.E."/>
            <person name="Keim P."/>
            <person name="Nierman W.C."/>
        </authorList>
    </citation>
    <scope>NUCLEOTIDE SEQUENCE [LARGE SCALE GENOMIC DNA]</scope>
    <source>
        <strain>NCTC 10229</strain>
    </source>
</reference>
<protein>
    <recommendedName>
        <fullName evidence="1">Dihydroxy-acid dehydratase</fullName>
        <shortName evidence="1">DAD</shortName>
        <ecNumber evidence="1">4.2.1.9</ecNumber>
    </recommendedName>
</protein>
<accession>A2SAC7</accession>
<comment type="function">
    <text evidence="1">Functions in the biosynthesis of branched-chain amino acids. Catalyzes the dehydration of (2R,3R)-2,3-dihydroxy-3-methylpentanoate (2,3-dihydroxy-3-methylvalerate) into 2-oxo-3-methylpentanoate (2-oxo-3-methylvalerate) and of (2R)-2,3-dihydroxy-3-methylbutanoate (2,3-dihydroxyisovalerate) into 2-oxo-3-methylbutanoate (2-oxoisovalerate), the penultimate precursor to L-isoleucine and L-valine, respectively.</text>
</comment>
<comment type="catalytic activity">
    <reaction evidence="1">
        <text>(2R)-2,3-dihydroxy-3-methylbutanoate = 3-methyl-2-oxobutanoate + H2O</text>
        <dbReference type="Rhea" id="RHEA:24809"/>
        <dbReference type="ChEBI" id="CHEBI:11851"/>
        <dbReference type="ChEBI" id="CHEBI:15377"/>
        <dbReference type="ChEBI" id="CHEBI:49072"/>
        <dbReference type="EC" id="4.2.1.9"/>
    </reaction>
    <physiologicalReaction direction="left-to-right" evidence="1">
        <dbReference type="Rhea" id="RHEA:24810"/>
    </physiologicalReaction>
</comment>
<comment type="catalytic activity">
    <reaction evidence="1">
        <text>(2R,3R)-2,3-dihydroxy-3-methylpentanoate = (S)-3-methyl-2-oxopentanoate + H2O</text>
        <dbReference type="Rhea" id="RHEA:27694"/>
        <dbReference type="ChEBI" id="CHEBI:15377"/>
        <dbReference type="ChEBI" id="CHEBI:35146"/>
        <dbReference type="ChEBI" id="CHEBI:49258"/>
        <dbReference type="EC" id="4.2.1.9"/>
    </reaction>
    <physiologicalReaction direction="left-to-right" evidence="1">
        <dbReference type="Rhea" id="RHEA:27695"/>
    </physiologicalReaction>
</comment>
<comment type="cofactor">
    <cofactor evidence="1">
        <name>[2Fe-2S] cluster</name>
        <dbReference type="ChEBI" id="CHEBI:190135"/>
    </cofactor>
    <text evidence="1">Binds 1 [2Fe-2S] cluster per subunit. This cluster acts as a Lewis acid cofactor.</text>
</comment>
<comment type="cofactor">
    <cofactor evidence="1">
        <name>Mg(2+)</name>
        <dbReference type="ChEBI" id="CHEBI:18420"/>
    </cofactor>
</comment>
<comment type="pathway">
    <text evidence="1">Amino-acid biosynthesis; L-isoleucine biosynthesis; L-isoleucine from 2-oxobutanoate: step 3/4.</text>
</comment>
<comment type="pathway">
    <text evidence="1">Amino-acid biosynthesis; L-valine biosynthesis; L-valine from pyruvate: step 3/4.</text>
</comment>
<comment type="subunit">
    <text evidence="1">Homodimer.</text>
</comment>
<comment type="similarity">
    <text evidence="1">Belongs to the IlvD/Edd family.</text>
</comment>
<name>ILVD_BURM9</name>
<organism>
    <name type="scientific">Burkholderia mallei (strain NCTC 10229)</name>
    <dbReference type="NCBI Taxonomy" id="412022"/>
    <lineage>
        <taxon>Bacteria</taxon>
        <taxon>Pseudomonadati</taxon>
        <taxon>Pseudomonadota</taxon>
        <taxon>Betaproteobacteria</taxon>
        <taxon>Burkholderiales</taxon>
        <taxon>Burkholderiaceae</taxon>
        <taxon>Burkholderia</taxon>
        <taxon>pseudomallei group</taxon>
    </lineage>
</organism>
<dbReference type="EC" id="4.2.1.9" evidence="1"/>
<dbReference type="EMBL" id="CP000546">
    <property type="protein sequence ID" value="ABN03356.1"/>
    <property type="molecule type" value="Genomic_DNA"/>
</dbReference>
<dbReference type="RefSeq" id="WP_004191611.1">
    <property type="nucleotide sequence ID" value="NC_008836.1"/>
</dbReference>
<dbReference type="SMR" id="A2SAC7"/>
<dbReference type="GeneID" id="92978440"/>
<dbReference type="KEGG" id="bml:BMA10229_A2952"/>
<dbReference type="HOGENOM" id="CLU_014271_4_1_4"/>
<dbReference type="UniPathway" id="UPA00047">
    <property type="reaction ID" value="UER00057"/>
</dbReference>
<dbReference type="UniPathway" id="UPA00049">
    <property type="reaction ID" value="UER00061"/>
</dbReference>
<dbReference type="Proteomes" id="UP000002283">
    <property type="component" value="Chromosome I"/>
</dbReference>
<dbReference type="GO" id="GO:0051537">
    <property type="term" value="F:2 iron, 2 sulfur cluster binding"/>
    <property type="evidence" value="ECO:0007669"/>
    <property type="project" value="UniProtKB-UniRule"/>
</dbReference>
<dbReference type="GO" id="GO:0004160">
    <property type="term" value="F:dihydroxy-acid dehydratase activity"/>
    <property type="evidence" value="ECO:0007669"/>
    <property type="project" value="UniProtKB-UniRule"/>
</dbReference>
<dbReference type="GO" id="GO:0000287">
    <property type="term" value="F:magnesium ion binding"/>
    <property type="evidence" value="ECO:0007669"/>
    <property type="project" value="UniProtKB-UniRule"/>
</dbReference>
<dbReference type="GO" id="GO:0009097">
    <property type="term" value="P:isoleucine biosynthetic process"/>
    <property type="evidence" value="ECO:0007669"/>
    <property type="project" value="UniProtKB-UniRule"/>
</dbReference>
<dbReference type="GO" id="GO:0009099">
    <property type="term" value="P:L-valine biosynthetic process"/>
    <property type="evidence" value="ECO:0007669"/>
    <property type="project" value="UniProtKB-UniRule"/>
</dbReference>
<dbReference type="FunFam" id="3.50.30.80:FF:000001">
    <property type="entry name" value="Dihydroxy-acid dehydratase"/>
    <property type="match status" value="1"/>
</dbReference>
<dbReference type="Gene3D" id="3.50.30.80">
    <property type="entry name" value="IlvD/EDD C-terminal domain-like"/>
    <property type="match status" value="1"/>
</dbReference>
<dbReference type="HAMAP" id="MF_00012">
    <property type="entry name" value="IlvD"/>
    <property type="match status" value="1"/>
</dbReference>
<dbReference type="InterPro" id="IPR050165">
    <property type="entry name" value="DHAD_IlvD/Edd"/>
</dbReference>
<dbReference type="InterPro" id="IPR042096">
    <property type="entry name" value="Dihydro-acid_dehy_C"/>
</dbReference>
<dbReference type="InterPro" id="IPR004404">
    <property type="entry name" value="DihydroxyA_deHydtase"/>
</dbReference>
<dbReference type="InterPro" id="IPR020558">
    <property type="entry name" value="DiOHA_6PGluconate_deHydtase_CS"/>
</dbReference>
<dbReference type="InterPro" id="IPR056740">
    <property type="entry name" value="ILV_EDD_C"/>
</dbReference>
<dbReference type="InterPro" id="IPR000581">
    <property type="entry name" value="ILV_EDD_N"/>
</dbReference>
<dbReference type="InterPro" id="IPR037237">
    <property type="entry name" value="IlvD/EDD_N"/>
</dbReference>
<dbReference type="NCBIfam" id="TIGR00110">
    <property type="entry name" value="ilvD"/>
    <property type="match status" value="1"/>
</dbReference>
<dbReference type="NCBIfam" id="NF002068">
    <property type="entry name" value="PRK00911.1"/>
    <property type="match status" value="1"/>
</dbReference>
<dbReference type="PANTHER" id="PTHR21000">
    <property type="entry name" value="DIHYDROXY-ACID DEHYDRATASE DAD"/>
    <property type="match status" value="1"/>
</dbReference>
<dbReference type="PANTHER" id="PTHR21000:SF5">
    <property type="entry name" value="DIHYDROXY-ACID DEHYDRATASE, MITOCHONDRIAL"/>
    <property type="match status" value="1"/>
</dbReference>
<dbReference type="Pfam" id="PF24877">
    <property type="entry name" value="ILV_EDD_C"/>
    <property type="match status" value="1"/>
</dbReference>
<dbReference type="Pfam" id="PF00920">
    <property type="entry name" value="ILVD_EDD_N"/>
    <property type="match status" value="1"/>
</dbReference>
<dbReference type="SUPFAM" id="SSF143975">
    <property type="entry name" value="IlvD/EDD N-terminal domain-like"/>
    <property type="match status" value="1"/>
</dbReference>
<dbReference type="SUPFAM" id="SSF52016">
    <property type="entry name" value="LeuD/IlvD-like"/>
    <property type="match status" value="1"/>
</dbReference>
<dbReference type="PROSITE" id="PS00886">
    <property type="entry name" value="ILVD_EDD_1"/>
    <property type="match status" value="1"/>
</dbReference>
<dbReference type="PROSITE" id="PS00887">
    <property type="entry name" value="ILVD_EDD_2"/>
    <property type="match status" value="1"/>
</dbReference>
<keyword id="KW-0001">2Fe-2S</keyword>
<keyword id="KW-0028">Amino-acid biosynthesis</keyword>
<keyword id="KW-0100">Branched-chain amino acid biosynthesis</keyword>
<keyword id="KW-0408">Iron</keyword>
<keyword id="KW-0411">Iron-sulfur</keyword>
<keyword id="KW-0456">Lyase</keyword>
<keyword id="KW-0460">Magnesium</keyword>
<keyword id="KW-0479">Metal-binding</keyword>
<proteinExistence type="inferred from homology"/>
<sequence>MSYNRRSKNITQGVARSPNRSMYYALGYQKEDFDKPMIGIANGHSTITPCNAGLQRLSDAAVAAVKDAGANPQIFGTPTISDGMSMGTEGMKYSLVSREVIADCIETCVQGQWMDGVVVVGGCDKNMPGGMIALARINVPGIYVYGGTIRPGHWKGHDLTIVSSFEAVGEFTAGRMSQEDFEGVEKNACPTTGSCGGMYTANTMSSSFEALGMSLLYSSTMANPDQEKVDSAAESARVLVEAVKKDLKPRDIITKQSIENAVSVIMATGGSTNAVLHYLAIAHAAEIDWSIEDFERIRKRVPVICDLKPSGQYVATDLHAAGGIPQVMKLLLDAGLLHGDCMTITGRTLAEELKDVPSVPRADQKVIHPIDQALYKEGHLAILKGNLAEDGAVAKITGLKNPVITGPARVFDDEQSALAAILDDRIRAGDVVVLRYLGPQGGPGMPEMLAPTSAIIGKGLGESVGLITDGRFSGGTWGMVVGHVAPEAFVGGTIALVQEGDSITIDAHKLLLQLNVDDAELARRRAAWKQPAPRYTRGVLAKYAALARPANQGAVTG</sequence>
<evidence type="ECO:0000255" key="1">
    <source>
        <dbReference type="HAMAP-Rule" id="MF_00012"/>
    </source>
</evidence>
<gene>
    <name evidence="1" type="primary">ilvD</name>
    <name type="ordered locus">BMA10229_A2952</name>
</gene>
<feature type="chain" id="PRO_1000000962" description="Dihydroxy-acid dehydratase">
    <location>
        <begin position="1"/>
        <end position="557"/>
    </location>
</feature>
<feature type="active site" description="Proton acceptor" evidence="1">
    <location>
        <position position="473"/>
    </location>
</feature>
<feature type="binding site" evidence="1">
    <location>
        <position position="50"/>
    </location>
    <ligand>
        <name>[2Fe-2S] cluster</name>
        <dbReference type="ChEBI" id="CHEBI:190135"/>
    </ligand>
</feature>
<feature type="binding site" evidence="1">
    <location>
        <position position="82"/>
    </location>
    <ligand>
        <name>Mg(2+)</name>
        <dbReference type="ChEBI" id="CHEBI:18420"/>
    </ligand>
</feature>
<feature type="binding site" evidence="1">
    <location>
        <position position="123"/>
    </location>
    <ligand>
        <name>[2Fe-2S] cluster</name>
        <dbReference type="ChEBI" id="CHEBI:190135"/>
    </ligand>
</feature>
<feature type="binding site" evidence="1">
    <location>
        <position position="124"/>
    </location>
    <ligand>
        <name>Mg(2+)</name>
        <dbReference type="ChEBI" id="CHEBI:18420"/>
    </ligand>
</feature>
<feature type="binding site" description="via carbamate group" evidence="1">
    <location>
        <position position="125"/>
    </location>
    <ligand>
        <name>Mg(2+)</name>
        <dbReference type="ChEBI" id="CHEBI:18420"/>
    </ligand>
</feature>
<feature type="binding site" evidence="1">
    <location>
        <position position="195"/>
    </location>
    <ligand>
        <name>[2Fe-2S] cluster</name>
        <dbReference type="ChEBI" id="CHEBI:190135"/>
    </ligand>
</feature>
<feature type="binding site" evidence="1">
    <location>
        <position position="447"/>
    </location>
    <ligand>
        <name>Mg(2+)</name>
        <dbReference type="ChEBI" id="CHEBI:18420"/>
    </ligand>
</feature>
<feature type="modified residue" description="N6-carboxylysine" evidence="1">
    <location>
        <position position="125"/>
    </location>
</feature>